<dbReference type="EMBL" id="AJ009559">
    <property type="protein sequence ID" value="CAA08752.1"/>
    <property type="status" value="ALT_INIT"/>
    <property type="molecule type" value="mRNA"/>
</dbReference>
<dbReference type="EMBL" id="AJ223087">
    <property type="protein sequence ID" value="CAA11110.1"/>
    <property type="status" value="ALT_INIT"/>
    <property type="molecule type" value="mRNA"/>
</dbReference>
<dbReference type="EMBL" id="AK012192">
    <property type="protein sequence ID" value="BAB28090.1"/>
    <property type="molecule type" value="mRNA"/>
</dbReference>
<dbReference type="EMBL" id="AK085020">
    <property type="protein sequence ID" value="BAC39341.1"/>
    <property type="molecule type" value="mRNA"/>
</dbReference>
<dbReference type="EMBL" id="AK166003">
    <property type="protein sequence ID" value="BAE38512.1"/>
    <property type="molecule type" value="mRNA"/>
</dbReference>
<dbReference type="EMBL" id="BC052434">
    <property type="protein sequence ID" value="AAH52434.1"/>
    <property type="molecule type" value="mRNA"/>
</dbReference>
<dbReference type="CCDS" id="CCDS25368.1"/>
<dbReference type="RefSeq" id="NP_001020950.1">
    <property type="nucleotide sequence ID" value="NM_001025779.2"/>
</dbReference>
<dbReference type="RefSeq" id="NP_035929.1">
    <property type="nucleotide sequence ID" value="NM_011799.2"/>
</dbReference>
<dbReference type="SMR" id="O89033"/>
<dbReference type="BioGRID" id="204750">
    <property type="interactions" value="22"/>
</dbReference>
<dbReference type="FunCoup" id="O89033">
    <property type="interactions" value="2186"/>
</dbReference>
<dbReference type="IntAct" id="O89033">
    <property type="interactions" value="19"/>
</dbReference>
<dbReference type="STRING" id="10090.ENSMUSP00000091469"/>
<dbReference type="iPTMnet" id="O89033"/>
<dbReference type="PhosphoSitePlus" id="O89033"/>
<dbReference type="PaxDb" id="10090-ENSMUSP00000091469"/>
<dbReference type="ProteomicsDB" id="283766"/>
<dbReference type="Antibodypedia" id="16461">
    <property type="antibodies" value="810 antibodies from 41 providers"/>
</dbReference>
<dbReference type="DNASU" id="23834"/>
<dbReference type="Ensembl" id="ENSMUST00000092706.13">
    <property type="protein sequence ID" value="ENSMUSP00000090382.7"/>
    <property type="gene ID" value="ENSMUSG00000017499.16"/>
</dbReference>
<dbReference type="GeneID" id="23834"/>
<dbReference type="KEGG" id="mmu:23834"/>
<dbReference type="UCSC" id="uc007lhu.1">
    <property type="organism name" value="mouse"/>
</dbReference>
<dbReference type="AGR" id="MGI:1345150"/>
<dbReference type="CTD" id="990"/>
<dbReference type="MGI" id="MGI:1345150">
    <property type="gene designation" value="Cdc6"/>
</dbReference>
<dbReference type="VEuPathDB" id="HostDB:ENSMUSG00000017499"/>
<dbReference type="eggNOG" id="KOG2227">
    <property type="taxonomic scope" value="Eukaryota"/>
</dbReference>
<dbReference type="GeneTree" id="ENSGT00530000063498"/>
<dbReference type="HOGENOM" id="CLU_012774_3_0_1"/>
<dbReference type="InParanoid" id="O89033"/>
<dbReference type="OrthoDB" id="1926878at2759"/>
<dbReference type="PhylomeDB" id="O89033"/>
<dbReference type="TreeFam" id="TF101051"/>
<dbReference type="Reactome" id="R-MMU-176187">
    <property type="pathway name" value="Activation of ATR in response to replication stress"/>
</dbReference>
<dbReference type="Reactome" id="R-MMU-68689">
    <property type="pathway name" value="CDC6 association with the ORC:origin complex"/>
</dbReference>
<dbReference type="Reactome" id="R-MMU-68949">
    <property type="pathway name" value="Orc1 removal from chromatin"/>
</dbReference>
<dbReference type="Reactome" id="R-MMU-68962">
    <property type="pathway name" value="Activation of the pre-replicative complex"/>
</dbReference>
<dbReference type="Reactome" id="R-MMU-69017">
    <property type="pathway name" value="CDK-mediated phosphorylation and removal of Cdc6"/>
</dbReference>
<dbReference type="BioGRID-ORCS" id="23834">
    <property type="hits" value="22 hits in 83 CRISPR screens"/>
</dbReference>
<dbReference type="ChiTaRS" id="Cdc6">
    <property type="organism name" value="mouse"/>
</dbReference>
<dbReference type="PRO" id="PR:O89033"/>
<dbReference type="Proteomes" id="UP000000589">
    <property type="component" value="Chromosome 11"/>
</dbReference>
<dbReference type="RNAct" id="O89033">
    <property type="molecule type" value="protein"/>
</dbReference>
<dbReference type="Bgee" id="ENSMUSG00000017499">
    <property type="expression patterns" value="Expressed in fetal liver hematopoietic progenitor cell and 175 other cell types or tissues"/>
</dbReference>
<dbReference type="ExpressionAtlas" id="O89033">
    <property type="expression patterns" value="baseline and differential"/>
</dbReference>
<dbReference type="GO" id="GO:0005737">
    <property type="term" value="C:cytoplasm"/>
    <property type="evidence" value="ECO:0000314"/>
    <property type="project" value="MGI"/>
</dbReference>
<dbReference type="GO" id="GO:0005829">
    <property type="term" value="C:cytosol"/>
    <property type="evidence" value="ECO:0007669"/>
    <property type="project" value="Ensembl"/>
</dbReference>
<dbReference type="GO" id="GO:0045171">
    <property type="term" value="C:intercellular bridge"/>
    <property type="evidence" value="ECO:0007669"/>
    <property type="project" value="Ensembl"/>
</dbReference>
<dbReference type="GO" id="GO:0072686">
    <property type="term" value="C:mitotic spindle"/>
    <property type="evidence" value="ECO:0007669"/>
    <property type="project" value="Ensembl"/>
</dbReference>
<dbReference type="GO" id="GO:0005654">
    <property type="term" value="C:nucleoplasm"/>
    <property type="evidence" value="ECO:0007669"/>
    <property type="project" value="Ensembl"/>
</dbReference>
<dbReference type="GO" id="GO:0005819">
    <property type="term" value="C:spindle"/>
    <property type="evidence" value="ECO:0000314"/>
    <property type="project" value="MGI"/>
</dbReference>
<dbReference type="GO" id="GO:0051233">
    <property type="term" value="C:spindle midzone"/>
    <property type="evidence" value="ECO:0007669"/>
    <property type="project" value="Ensembl"/>
</dbReference>
<dbReference type="GO" id="GO:0000922">
    <property type="term" value="C:spindle pole"/>
    <property type="evidence" value="ECO:0007669"/>
    <property type="project" value="Ensembl"/>
</dbReference>
<dbReference type="GO" id="GO:0005524">
    <property type="term" value="F:ATP binding"/>
    <property type="evidence" value="ECO:0007669"/>
    <property type="project" value="UniProtKB-KW"/>
</dbReference>
<dbReference type="GO" id="GO:0016887">
    <property type="term" value="F:ATP hydrolysis activity"/>
    <property type="evidence" value="ECO:0007669"/>
    <property type="project" value="InterPro"/>
</dbReference>
<dbReference type="GO" id="GO:0003682">
    <property type="term" value="F:chromatin binding"/>
    <property type="evidence" value="ECO:0000314"/>
    <property type="project" value="MGI"/>
</dbReference>
<dbReference type="GO" id="GO:0120283">
    <property type="term" value="F:protein serine/threonine kinase binding"/>
    <property type="evidence" value="ECO:0007669"/>
    <property type="project" value="Ensembl"/>
</dbReference>
<dbReference type="GO" id="GO:0051301">
    <property type="term" value="P:cell division"/>
    <property type="evidence" value="ECO:0007669"/>
    <property type="project" value="UniProtKB-KW"/>
</dbReference>
<dbReference type="GO" id="GO:1904385">
    <property type="term" value="P:cellular response to angiotensin"/>
    <property type="evidence" value="ECO:0007669"/>
    <property type="project" value="Ensembl"/>
</dbReference>
<dbReference type="GO" id="GO:1904117">
    <property type="term" value="P:cellular response to vasopressin"/>
    <property type="evidence" value="ECO:0007669"/>
    <property type="project" value="Ensembl"/>
</dbReference>
<dbReference type="GO" id="GO:0006270">
    <property type="term" value="P:DNA replication initiation"/>
    <property type="evidence" value="ECO:0007669"/>
    <property type="project" value="InterPro"/>
</dbReference>
<dbReference type="GO" id="GO:0051984">
    <property type="term" value="P:positive regulation of chromosome segregation"/>
    <property type="evidence" value="ECO:0007669"/>
    <property type="project" value="Ensembl"/>
</dbReference>
<dbReference type="GO" id="GO:0032467">
    <property type="term" value="P:positive regulation of cytokinesis"/>
    <property type="evidence" value="ECO:0007669"/>
    <property type="project" value="Ensembl"/>
</dbReference>
<dbReference type="GO" id="GO:0048146">
    <property type="term" value="P:positive regulation of fibroblast proliferation"/>
    <property type="evidence" value="ECO:0007669"/>
    <property type="project" value="Ensembl"/>
</dbReference>
<dbReference type="GO" id="GO:0030071">
    <property type="term" value="P:regulation of mitotic metaphase/anaphase transition"/>
    <property type="evidence" value="ECO:0007669"/>
    <property type="project" value="Ensembl"/>
</dbReference>
<dbReference type="CDD" id="cd00009">
    <property type="entry name" value="AAA"/>
    <property type="match status" value="1"/>
</dbReference>
<dbReference type="CDD" id="cd08768">
    <property type="entry name" value="Cdc6_C"/>
    <property type="match status" value="1"/>
</dbReference>
<dbReference type="FunFam" id="1.10.10.10:FF:000265">
    <property type="entry name" value="Cell division control protein"/>
    <property type="match status" value="1"/>
</dbReference>
<dbReference type="FunFam" id="1.10.8.60:FF:000058">
    <property type="entry name" value="Cell division control protein"/>
    <property type="match status" value="1"/>
</dbReference>
<dbReference type="FunFam" id="3.40.50.300:FF:000547">
    <property type="entry name" value="Cell division control protein"/>
    <property type="match status" value="1"/>
</dbReference>
<dbReference type="Gene3D" id="1.10.8.60">
    <property type="match status" value="1"/>
</dbReference>
<dbReference type="Gene3D" id="3.40.50.300">
    <property type="entry name" value="P-loop containing nucleotide triphosphate hydrolases"/>
    <property type="match status" value="1"/>
</dbReference>
<dbReference type="Gene3D" id="1.10.10.10">
    <property type="entry name" value="Winged helix-like DNA-binding domain superfamily/Winged helix DNA-binding domain"/>
    <property type="match status" value="1"/>
</dbReference>
<dbReference type="InterPro" id="IPR003593">
    <property type="entry name" value="AAA+_ATPase"/>
</dbReference>
<dbReference type="InterPro" id="IPR049945">
    <property type="entry name" value="AAA_22"/>
</dbReference>
<dbReference type="InterPro" id="IPR016314">
    <property type="entry name" value="Cdc6/18"/>
</dbReference>
<dbReference type="InterPro" id="IPR015163">
    <property type="entry name" value="Cdc6_C"/>
</dbReference>
<dbReference type="InterPro" id="IPR054425">
    <property type="entry name" value="Cdc6_ORC1-like_ATPase_lid"/>
</dbReference>
<dbReference type="InterPro" id="IPR050311">
    <property type="entry name" value="ORC1/CDC6"/>
</dbReference>
<dbReference type="InterPro" id="IPR027417">
    <property type="entry name" value="P-loop_NTPase"/>
</dbReference>
<dbReference type="InterPro" id="IPR036388">
    <property type="entry name" value="WH-like_DNA-bd_sf"/>
</dbReference>
<dbReference type="InterPro" id="IPR036390">
    <property type="entry name" value="WH_DNA-bd_sf"/>
</dbReference>
<dbReference type="PANTHER" id="PTHR10763:SF26">
    <property type="entry name" value="CELL DIVISION CONTROL PROTEIN 6 HOMOLOG"/>
    <property type="match status" value="1"/>
</dbReference>
<dbReference type="PANTHER" id="PTHR10763">
    <property type="entry name" value="CELL DIVISION CONTROL PROTEIN 6-RELATED"/>
    <property type="match status" value="1"/>
</dbReference>
<dbReference type="Pfam" id="PF13401">
    <property type="entry name" value="AAA_22"/>
    <property type="match status" value="1"/>
</dbReference>
<dbReference type="Pfam" id="PF22606">
    <property type="entry name" value="Cdc6-ORC-like_ATPase_lid"/>
    <property type="match status" value="1"/>
</dbReference>
<dbReference type="Pfam" id="PF09079">
    <property type="entry name" value="Cdc6_C"/>
    <property type="match status" value="1"/>
</dbReference>
<dbReference type="PIRSF" id="PIRSF001767">
    <property type="entry name" value="Cdc6"/>
    <property type="match status" value="1"/>
</dbReference>
<dbReference type="SMART" id="SM00382">
    <property type="entry name" value="AAA"/>
    <property type="match status" value="1"/>
</dbReference>
<dbReference type="SMART" id="SM01074">
    <property type="entry name" value="Cdc6_C"/>
    <property type="match status" value="1"/>
</dbReference>
<dbReference type="SUPFAM" id="SSF52540">
    <property type="entry name" value="P-loop containing nucleoside triphosphate hydrolases"/>
    <property type="match status" value="1"/>
</dbReference>
<dbReference type="SUPFAM" id="SSF46785">
    <property type="entry name" value="Winged helix' DNA-binding domain"/>
    <property type="match status" value="1"/>
</dbReference>
<feature type="chain" id="PRO_0000150980" description="Cell division control protein 6 homolog">
    <location>
        <begin position="1"/>
        <end position="562"/>
    </location>
</feature>
<feature type="region of interest" description="Disordered" evidence="3">
    <location>
        <begin position="1"/>
        <end position="34"/>
    </location>
</feature>
<feature type="region of interest" description="Disordered" evidence="3">
    <location>
        <begin position="57"/>
        <end position="140"/>
    </location>
</feature>
<feature type="short sequence motif" description="Cy" evidence="1">
    <location>
        <begin position="94"/>
        <end position="101"/>
    </location>
</feature>
<feature type="compositionally biased region" description="Polar residues" evidence="3">
    <location>
        <begin position="1"/>
        <end position="11"/>
    </location>
</feature>
<feature type="compositionally biased region" description="Basic and acidic residues" evidence="3">
    <location>
        <begin position="130"/>
        <end position="140"/>
    </location>
</feature>
<feature type="binding site" evidence="2">
    <location>
        <begin position="204"/>
        <end position="211"/>
    </location>
    <ligand>
        <name>ATP</name>
        <dbReference type="ChEBI" id="CHEBI:30616"/>
    </ligand>
</feature>
<feature type="modified residue" description="Phosphoserine" evidence="1">
    <location>
        <position position="55"/>
    </location>
</feature>
<feature type="modified residue" description="Phosphothreonine" evidence="5">
    <location>
        <position position="68"/>
    </location>
</feature>
<feature type="modified residue" description="Phosphoserine" evidence="5">
    <location>
        <position position="72"/>
    </location>
</feature>
<feature type="modified residue" description="Phosphoserine" evidence="5">
    <location>
        <position position="75"/>
    </location>
</feature>
<feature type="modified residue" description="Phosphoserine" evidence="1">
    <location>
        <position position="129"/>
    </location>
</feature>
<feature type="modified residue" description="Phosphoserine" evidence="5">
    <location>
        <position position="421"/>
    </location>
</feature>
<feature type="sequence conflict" description="In Ref. 3; BAB28090." evidence="4" ref="3">
    <original>E</original>
    <variation>K</variation>
    <location>
        <position position="155"/>
    </location>
</feature>
<keyword id="KW-0067">ATP-binding</keyword>
<keyword id="KW-0131">Cell cycle</keyword>
<keyword id="KW-0132">Cell division</keyword>
<keyword id="KW-0963">Cytoplasm</keyword>
<keyword id="KW-0235">DNA replication</keyword>
<keyword id="KW-0498">Mitosis</keyword>
<keyword id="KW-0547">Nucleotide-binding</keyword>
<keyword id="KW-0539">Nucleus</keyword>
<keyword id="KW-0597">Phosphoprotein</keyword>
<keyword id="KW-1185">Reference proteome</keyword>
<keyword id="KW-0832">Ubl conjugation</keyword>
<reference key="1">
    <citation type="journal article" date="1998" name="Mol. Cell. Biol.">
        <title>Cell cycle-regulated expression of mammalian CDC6 is dependent on E2F.</title>
        <authorList>
            <person name="Hateboer G."/>
            <person name="Wobst A."/>
            <person name="Petersen B.O."/>
            <person name="Le Cam L."/>
            <person name="Vigo E."/>
            <person name="Sardet C."/>
            <person name="Helin K."/>
        </authorList>
    </citation>
    <scope>NUCLEOTIDE SEQUENCE [MRNA]</scope>
</reference>
<reference key="2">
    <citation type="submission" date="1997-12" db="EMBL/GenBank/DDBJ databases">
        <title>A mouse related protein to human Cdc6.</title>
        <authorList>
            <person name="Strub A."/>
            <person name="Staib C."/>
            <person name="Grummt F."/>
        </authorList>
    </citation>
    <scope>NUCLEOTIDE SEQUENCE [MRNA]</scope>
</reference>
<reference key="3">
    <citation type="journal article" date="2005" name="Science">
        <title>The transcriptional landscape of the mammalian genome.</title>
        <authorList>
            <person name="Carninci P."/>
            <person name="Kasukawa T."/>
            <person name="Katayama S."/>
            <person name="Gough J."/>
            <person name="Frith M.C."/>
            <person name="Maeda N."/>
            <person name="Oyama R."/>
            <person name="Ravasi T."/>
            <person name="Lenhard B."/>
            <person name="Wells C."/>
            <person name="Kodzius R."/>
            <person name="Shimokawa K."/>
            <person name="Bajic V.B."/>
            <person name="Brenner S.E."/>
            <person name="Batalov S."/>
            <person name="Forrest A.R."/>
            <person name="Zavolan M."/>
            <person name="Davis M.J."/>
            <person name="Wilming L.G."/>
            <person name="Aidinis V."/>
            <person name="Allen J.E."/>
            <person name="Ambesi-Impiombato A."/>
            <person name="Apweiler R."/>
            <person name="Aturaliya R.N."/>
            <person name="Bailey T.L."/>
            <person name="Bansal M."/>
            <person name="Baxter L."/>
            <person name="Beisel K.W."/>
            <person name="Bersano T."/>
            <person name="Bono H."/>
            <person name="Chalk A.M."/>
            <person name="Chiu K.P."/>
            <person name="Choudhary V."/>
            <person name="Christoffels A."/>
            <person name="Clutterbuck D.R."/>
            <person name="Crowe M.L."/>
            <person name="Dalla E."/>
            <person name="Dalrymple B.P."/>
            <person name="de Bono B."/>
            <person name="Della Gatta G."/>
            <person name="di Bernardo D."/>
            <person name="Down T."/>
            <person name="Engstrom P."/>
            <person name="Fagiolini M."/>
            <person name="Faulkner G."/>
            <person name="Fletcher C.F."/>
            <person name="Fukushima T."/>
            <person name="Furuno M."/>
            <person name="Futaki S."/>
            <person name="Gariboldi M."/>
            <person name="Georgii-Hemming P."/>
            <person name="Gingeras T.R."/>
            <person name="Gojobori T."/>
            <person name="Green R.E."/>
            <person name="Gustincich S."/>
            <person name="Harbers M."/>
            <person name="Hayashi Y."/>
            <person name="Hensch T.K."/>
            <person name="Hirokawa N."/>
            <person name="Hill D."/>
            <person name="Huminiecki L."/>
            <person name="Iacono M."/>
            <person name="Ikeo K."/>
            <person name="Iwama A."/>
            <person name="Ishikawa T."/>
            <person name="Jakt M."/>
            <person name="Kanapin A."/>
            <person name="Katoh M."/>
            <person name="Kawasawa Y."/>
            <person name="Kelso J."/>
            <person name="Kitamura H."/>
            <person name="Kitano H."/>
            <person name="Kollias G."/>
            <person name="Krishnan S.P."/>
            <person name="Kruger A."/>
            <person name="Kummerfeld S.K."/>
            <person name="Kurochkin I.V."/>
            <person name="Lareau L.F."/>
            <person name="Lazarevic D."/>
            <person name="Lipovich L."/>
            <person name="Liu J."/>
            <person name="Liuni S."/>
            <person name="McWilliam S."/>
            <person name="Madan Babu M."/>
            <person name="Madera M."/>
            <person name="Marchionni L."/>
            <person name="Matsuda H."/>
            <person name="Matsuzawa S."/>
            <person name="Miki H."/>
            <person name="Mignone F."/>
            <person name="Miyake S."/>
            <person name="Morris K."/>
            <person name="Mottagui-Tabar S."/>
            <person name="Mulder N."/>
            <person name="Nakano N."/>
            <person name="Nakauchi H."/>
            <person name="Ng P."/>
            <person name="Nilsson R."/>
            <person name="Nishiguchi S."/>
            <person name="Nishikawa S."/>
            <person name="Nori F."/>
            <person name="Ohara O."/>
            <person name="Okazaki Y."/>
            <person name="Orlando V."/>
            <person name="Pang K.C."/>
            <person name="Pavan W.J."/>
            <person name="Pavesi G."/>
            <person name="Pesole G."/>
            <person name="Petrovsky N."/>
            <person name="Piazza S."/>
            <person name="Reed J."/>
            <person name="Reid J.F."/>
            <person name="Ring B.Z."/>
            <person name="Ringwald M."/>
            <person name="Rost B."/>
            <person name="Ruan Y."/>
            <person name="Salzberg S.L."/>
            <person name="Sandelin A."/>
            <person name="Schneider C."/>
            <person name="Schoenbach C."/>
            <person name="Sekiguchi K."/>
            <person name="Semple C.A."/>
            <person name="Seno S."/>
            <person name="Sessa L."/>
            <person name="Sheng Y."/>
            <person name="Shibata Y."/>
            <person name="Shimada H."/>
            <person name="Shimada K."/>
            <person name="Silva D."/>
            <person name="Sinclair B."/>
            <person name="Sperling S."/>
            <person name="Stupka E."/>
            <person name="Sugiura K."/>
            <person name="Sultana R."/>
            <person name="Takenaka Y."/>
            <person name="Taki K."/>
            <person name="Tammoja K."/>
            <person name="Tan S.L."/>
            <person name="Tang S."/>
            <person name="Taylor M.S."/>
            <person name="Tegner J."/>
            <person name="Teichmann S.A."/>
            <person name="Ueda H.R."/>
            <person name="van Nimwegen E."/>
            <person name="Verardo R."/>
            <person name="Wei C.L."/>
            <person name="Yagi K."/>
            <person name="Yamanishi H."/>
            <person name="Zabarovsky E."/>
            <person name="Zhu S."/>
            <person name="Zimmer A."/>
            <person name="Hide W."/>
            <person name="Bult C."/>
            <person name="Grimmond S.M."/>
            <person name="Teasdale R.D."/>
            <person name="Liu E.T."/>
            <person name="Brusic V."/>
            <person name="Quackenbush J."/>
            <person name="Wahlestedt C."/>
            <person name="Mattick J.S."/>
            <person name="Hume D.A."/>
            <person name="Kai C."/>
            <person name="Sasaki D."/>
            <person name="Tomaru Y."/>
            <person name="Fukuda S."/>
            <person name="Kanamori-Katayama M."/>
            <person name="Suzuki M."/>
            <person name="Aoki J."/>
            <person name="Arakawa T."/>
            <person name="Iida J."/>
            <person name="Imamura K."/>
            <person name="Itoh M."/>
            <person name="Kato T."/>
            <person name="Kawaji H."/>
            <person name="Kawagashira N."/>
            <person name="Kawashima T."/>
            <person name="Kojima M."/>
            <person name="Kondo S."/>
            <person name="Konno H."/>
            <person name="Nakano K."/>
            <person name="Ninomiya N."/>
            <person name="Nishio T."/>
            <person name="Okada M."/>
            <person name="Plessy C."/>
            <person name="Shibata K."/>
            <person name="Shiraki T."/>
            <person name="Suzuki S."/>
            <person name="Tagami M."/>
            <person name="Waki K."/>
            <person name="Watahiki A."/>
            <person name="Okamura-Oho Y."/>
            <person name="Suzuki H."/>
            <person name="Kawai J."/>
            <person name="Hayashizaki Y."/>
        </authorList>
    </citation>
    <scope>NUCLEOTIDE SEQUENCE [LARGE SCALE MRNA]</scope>
    <source>
        <strain>C57BL/6J</strain>
        <tissue>Lung</tissue>
    </source>
</reference>
<reference key="4">
    <citation type="journal article" date="2004" name="Genome Res.">
        <title>The status, quality, and expansion of the NIH full-length cDNA project: the Mammalian Gene Collection (MGC).</title>
        <authorList>
            <consortium name="The MGC Project Team"/>
        </authorList>
    </citation>
    <scope>NUCLEOTIDE SEQUENCE [LARGE SCALE MRNA]</scope>
    <source>
        <strain>C57BL/6J</strain>
        <tissue>Brain</tissue>
    </source>
</reference>
<reference key="5">
    <citation type="journal article" date="2010" name="Cell">
        <title>A tissue-specific atlas of mouse protein phosphorylation and expression.</title>
        <authorList>
            <person name="Huttlin E.L."/>
            <person name="Jedrychowski M.P."/>
            <person name="Elias J.E."/>
            <person name="Goswami T."/>
            <person name="Rad R."/>
            <person name="Beausoleil S.A."/>
            <person name="Villen J."/>
            <person name="Haas W."/>
            <person name="Sowa M.E."/>
            <person name="Gygi S.P."/>
        </authorList>
    </citation>
    <scope>PHOSPHORYLATION [LARGE SCALE ANALYSIS] AT THR-68; SER-72; SER-75 AND SER-421</scope>
    <scope>IDENTIFICATION BY MASS SPECTROMETRY [LARGE SCALE ANALYSIS]</scope>
    <source>
        <tissue>Spleen</tissue>
    </source>
</reference>
<sequence length="562" mass="62614">MPQTRSQTQATIGFPKKKLSNTLKKPNSRDCEVKLRNVQPVPTTPCVDVKLLPLSPRKRLGDDNLCNTPRLSPCSPPKLGKKENGPPRSHTWKGCRLVFDDEPTFKASPPKEQDRVRQHQIRSSSAQRSPESKADPEQKCPPEKESVCIRLFKQEGTCYQQAKLVLNTAVPDRLPAREQEMGVIRNFLKEHICGKKAGSLYLSGAPGTGKTACLSRILQDFKKEVKGFKSILLNCMSLRSAQAVFPAIAQEIGREELCRPAGKDLMRKLEKHLTAEKGPMIVLVLDEMDQLDSKGQDVLYTLFEWPWLSNSRLVLIGIANTLDLTDRILPRLEARENCKPQLLNFPPYTRNQIAAILQDRLSQVSKDQVLDSAAIQFCARKVSAVSGDIRKALDVCRRAIEIVESDVRSQTVLKPLSECKSPSESPVPKRVGLAHISQVISEVDGNRVTLSQENTQDSLPLQQKILVCSLLLLTRRLKIKEVTLGKLYEAYSSICRKQQVTAVDQSECLSLSGLLESRGLVGLKKNKESRLTKVSLKIEEKEIEHVLNGKAFTGNILAAGLP</sequence>
<accession>O89033</accession>
<accession>Q3TMD0</accession>
<accession>Q8C3S5</accession>
<accession>Q9CZT0</accession>
<gene>
    <name type="primary">Cdc6</name>
</gene>
<evidence type="ECO:0000250" key="1">
    <source>
        <dbReference type="UniProtKB" id="Q99741"/>
    </source>
</evidence>
<evidence type="ECO:0000255" key="2"/>
<evidence type="ECO:0000256" key="3">
    <source>
        <dbReference type="SAM" id="MobiDB-lite"/>
    </source>
</evidence>
<evidence type="ECO:0000305" key="4"/>
<evidence type="ECO:0007744" key="5">
    <source>
    </source>
</evidence>
<proteinExistence type="evidence at protein level"/>
<comment type="function">
    <text>Involved in the initiation of DNA replication. Also participates in checkpoint controls that ensure DNA replication is completed before mitosis is initiated.</text>
</comment>
<comment type="subunit">
    <text evidence="1">Interacts with PCNA, ORC1, cyclin-CDK (By similarity). Interacts with HUWE1 (By similarity). Interacts with ANKRD17 (By similarity). Interacts with GRWD1; origin binding of GRWD1 is dependent on CDC6 (By similarity). Interacts with CDT1; are mutually dependent on one another for loading MCM complexes onto chromatin (By similarity). Interacts with TTC4 (By similarity). Interacts (via Cy motif) with CCNF; the interaction takes place during G2 and M phase (By similarity). Interacts with CDH1 (By similarity).</text>
</comment>
<comment type="subcellular location">
    <subcellularLocation>
        <location evidence="1">Nucleus</location>
    </subcellularLocation>
    <subcellularLocation>
        <location evidence="1">Cytoplasm</location>
    </subcellularLocation>
    <text evidence="1">The protein is nuclear in G1 and cytoplasmic in S-phase cells.</text>
</comment>
<comment type="PTM">
    <text evidence="1">Ubiquitinated by the SCF(CCNF) E3 ubiquitin-protein ligase complex.</text>
</comment>
<comment type="similarity">
    <text evidence="4">Belongs to the CDC6/cdc18 family.</text>
</comment>
<comment type="sequence caution" evidence="4">
    <conflict type="erroneous initiation">
        <sequence resource="EMBL-CDS" id="CAA08752"/>
    </conflict>
    <text>Extended N-terminus.</text>
</comment>
<comment type="sequence caution" evidence="4">
    <conflict type="erroneous initiation">
        <sequence resource="EMBL-CDS" id="CAA11110"/>
    </conflict>
    <text>Extended N-terminus.</text>
</comment>
<name>CDC6_MOUSE</name>
<protein>
    <recommendedName>
        <fullName>Cell division control protein 6 homolog</fullName>
    </recommendedName>
    <alternativeName>
        <fullName>CDC6-related protein</fullName>
    </alternativeName>
    <alternativeName>
        <fullName>p62(cdc6)</fullName>
    </alternativeName>
</protein>
<organism>
    <name type="scientific">Mus musculus</name>
    <name type="common">Mouse</name>
    <dbReference type="NCBI Taxonomy" id="10090"/>
    <lineage>
        <taxon>Eukaryota</taxon>
        <taxon>Metazoa</taxon>
        <taxon>Chordata</taxon>
        <taxon>Craniata</taxon>
        <taxon>Vertebrata</taxon>
        <taxon>Euteleostomi</taxon>
        <taxon>Mammalia</taxon>
        <taxon>Eutheria</taxon>
        <taxon>Euarchontoglires</taxon>
        <taxon>Glires</taxon>
        <taxon>Rodentia</taxon>
        <taxon>Myomorpha</taxon>
        <taxon>Muroidea</taxon>
        <taxon>Muridae</taxon>
        <taxon>Murinae</taxon>
        <taxon>Mus</taxon>
        <taxon>Mus</taxon>
    </lineage>
</organism>